<comment type="function">
    <text evidence="1">Cell wall formation.</text>
</comment>
<comment type="catalytic activity">
    <reaction evidence="1">
        <text>UDP-N-acetyl-alpha-D-muramate + NADP(+) = UDP-N-acetyl-3-O-(1-carboxyvinyl)-alpha-D-glucosamine + NADPH + H(+)</text>
        <dbReference type="Rhea" id="RHEA:12248"/>
        <dbReference type="ChEBI" id="CHEBI:15378"/>
        <dbReference type="ChEBI" id="CHEBI:57783"/>
        <dbReference type="ChEBI" id="CHEBI:58349"/>
        <dbReference type="ChEBI" id="CHEBI:68483"/>
        <dbReference type="ChEBI" id="CHEBI:70757"/>
        <dbReference type="EC" id="1.3.1.98"/>
    </reaction>
</comment>
<comment type="cofactor">
    <cofactor evidence="1">
        <name>FAD</name>
        <dbReference type="ChEBI" id="CHEBI:57692"/>
    </cofactor>
</comment>
<comment type="pathway">
    <text evidence="1">Cell wall biogenesis; peptidoglycan biosynthesis.</text>
</comment>
<comment type="subcellular location">
    <subcellularLocation>
        <location evidence="1">Cytoplasm</location>
    </subcellularLocation>
</comment>
<comment type="similarity">
    <text evidence="1">Belongs to the MurB family.</text>
</comment>
<accession>Q46XL1</accession>
<feature type="chain" id="PRO_0000224712" description="UDP-N-acetylenolpyruvoylglucosamine reductase">
    <location>
        <begin position="1"/>
        <end position="336"/>
    </location>
</feature>
<feature type="domain" description="FAD-binding PCMH-type" evidence="1">
    <location>
        <begin position="17"/>
        <end position="188"/>
    </location>
</feature>
<feature type="active site" evidence="1">
    <location>
        <position position="164"/>
    </location>
</feature>
<feature type="active site" description="Proton donor" evidence="1">
    <location>
        <position position="236"/>
    </location>
</feature>
<feature type="active site" evidence="1">
    <location>
        <position position="332"/>
    </location>
</feature>
<protein>
    <recommendedName>
        <fullName evidence="1">UDP-N-acetylenolpyruvoylglucosamine reductase</fullName>
        <ecNumber evidence="1">1.3.1.98</ecNumber>
    </recommendedName>
    <alternativeName>
        <fullName evidence="1">UDP-N-acetylmuramate dehydrogenase</fullName>
    </alternativeName>
</protein>
<gene>
    <name evidence="1" type="primary">murB</name>
    <name type="ordered locus">Reut_A2761</name>
</gene>
<reference key="1">
    <citation type="journal article" date="2010" name="PLoS ONE">
        <title>The complete multipartite genome sequence of Cupriavidus necator JMP134, a versatile pollutant degrader.</title>
        <authorList>
            <person name="Lykidis A."/>
            <person name="Perez-Pantoja D."/>
            <person name="Ledger T."/>
            <person name="Mavromatis K."/>
            <person name="Anderson I.J."/>
            <person name="Ivanova N.N."/>
            <person name="Hooper S.D."/>
            <person name="Lapidus A."/>
            <person name="Lucas S."/>
            <person name="Gonzalez B."/>
            <person name="Kyrpides N.C."/>
        </authorList>
    </citation>
    <scope>NUCLEOTIDE SEQUENCE [LARGE SCALE GENOMIC DNA]</scope>
    <source>
        <strain>JMP134 / LMG 1197</strain>
    </source>
</reference>
<keyword id="KW-0131">Cell cycle</keyword>
<keyword id="KW-0132">Cell division</keyword>
<keyword id="KW-0133">Cell shape</keyword>
<keyword id="KW-0961">Cell wall biogenesis/degradation</keyword>
<keyword id="KW-0963">Cytoplasm</keyword>
<keyword id="KW-0274">FAD</keyword>
<keyword id="KW-0285">Flavoprotein</keyword>
<keyword id="KW-0521">NADP</keyword>
<keyword id="KW-0560">Oxidoreductase</keyword>
<keyword id="KW-0573">Peptidoglycan synthesis</keyword>
<dbReference type="EC" id="1.3.1.98" evidence="1"/>
<dbReference type="EMBL" id="CP000090">
    <property type="protein sequence ID" value="AAZ62122.1"/>
    <property type="molecule type" value="Genomic_DNA"/>
</dbReference>
<dbReference type="SMR" id="Q46XL1"/>
<dbReference type="STRING" id="264198.Reut_A2761"/>
<dbReference type="KEGG" id="reu:Reut_A2761"/>
<dbReference type="eggNOG" id="COG0812">
    <property type="taxonomic scope" value="Bacteria"/>
</dbReference>
<dbReference type="HOGENOM" id="CLU_035304_0_0_4"/>
<dbReference type="OrthoDB" id="9804753at2"/>
<dbReference type="UniPathway" id="UPA00219"/>
<dbReference type="GO" id="GO:0005829">
    <property type="term" value="C:cytosol"/>
    <property type="evidence" value="ECO:0007669"/>
    <property type="project" value="TreeGrafter"/>
</dbReference>
<dbReference type="GO" id="GO:0071949">
    <property type="term" value="F:FAD binding"/>
    <property type="evidence" value="ECO:0007669"/>
    <property type="project" value="InterPro"/>
</dbReference>
<dbReference type="GO" id="GO:0008762">
    <property type="term" value="F:UDP-N-acetylmuramate dehydrogenase activity"/>
    <property type="evidence" value="ECO:0007669"/>
    <property type="project" value="UniProtKB-UniRule"/>
</dbReference>
<dbReference type="GO" id="GO:0051301">
    <property type="term" value="P:cell division"/>
    <property type="evidence" value="ECO:0007669"/>
    <property type="project" value="UniProtKB-KW"/>
</dbReference>
<dbReference type="GO" id="GO:0071555">
    <property type="term" value="P:cell wall organization"/>
    <property type="evidence" value="ECO:0007669"/>
    <property type="project" value="UniProtKB-KW"/>
</dbReference>
<dbReference type="GO" id="GO:0009252">
    <property type="term" value="P:peptidoglycan biosynthetic process"/>
    <property type="evidence" value="ECO:0007669"/>
    <property type="project" value="UniProtKB-UniRule"/>
</dbReference>
<dbReference type="GO" id="GO:0008360">
    <property type="term" value="P:regulation of cell shape"/>
    <property type="evidence" value="ECO:0007669"/>
    <property type="project" value="UniProtKB-KW"/>
</dbReference>
<dbReference type="Gene3D" id="3.30.465.10">
    <property type="match status" value="1"/>
</dbReference>
<dbReference type="Gene3D" id="3.90.78.10">
    <property type="entry name" value="UDP-N-acetylenolpyruvoylglucosamine reductase, C-terminal domain"/>
    <property type="match status" value="1"/>
</dbReference>
<dbReference type="Gene3D" id="3.30.43.10">
    <property type="entry name" value="Uridine Diphospho-n-acetylenolpyruvylglucosamine Reductase, domain 2"/>
    <property type="match status" value="1"/>
</dbReference>
<dbReference type="HAMAP" id="MF_00037">
    <property type="entry name" value="MurB"/>
    <property type="match status" value="1"/>
</dbReference>
<dbReference type="InterPro" id="IPR016166">
    <property type="entry name" value="FAD-bd_PCMH"/>
</dbReference>
<dbReference type="InterPro" id="IPR036318">
    <property type="entry name" value="FAD-bd_PCMH-like_sf"/>
</dbReference>
<dbReference type="InterPro" id="IPR016167">
    <property type="entry name" value="FAD-bd_PCMH_sub1"/>
</dbReference>
<dbReference type="InterPro" id="IPR016169">
    <property type="entry name" value="FAD-bd_PCMH_sub2"/>
</dbReference>
<dbReference type="InterPro" id="IPR003170">
    <property type="entry name" value="MurB"/>
</dbReference>
<dbReference type="InterPro" id="IPR011601">
    <property type="entry name" value="MurB_C"/>
</dbReference>
<dbReference type="InterPro" id="IPR036635">
    <property type="entry name" value="MurB_C_sf"/>
</dbReference>
<dbReference type="InterPro" id="IPR006094">
    <property type="entry name" value="Oxid_FAD_bind_N"/>
</dbReference>
<dbReference type="NCBIfam" id="TIGR00179">
    <property type="entry name" value="murB"/>
    <property type="match status" value="1"/>
</dbReference>
<dbReference type="NCBIfam" id="NF000755">
    <property type="entry name" value="PRK00046.1"/>
    <property type="match status" value="1"/>
</dbReference>
<dbReference type="NCBIfam" id="NF010478">
    <property type="entry name" value="PRK13903.1"/>
    <property type="match status" value="1"/>
</dbReference>
<dbReference type="PANTHER" id="PTHR21071">
    <property type="entry name" value="UDP-N-ACETYLENOLPYRUVOYLGLUCOSAMINE REDUCTASE"/>
    <property type="match status" value="1"/>
</dbReference>
<dbReference type="PANTHER" id="PTHR21071:SF4">
    <property type="entry name" value="UDP-N-ACETYLENOLPYRUVOYLGLUCOSAMINE REDUCTASE"/>
    <property type="match status" value="1"/>
</dbReference>
<dbReference type="Pfam" id="PF01565">
    <property type="entry name" value="FAD_binding_4"/>
    <property type="match status" value="1"/>
</dbReference>
<dbReference type="Pfam" id="PF02873">
    <property type="entry name" value="MurB_C"/>
    <property type="match status" value="1"/>
</dbReference>
<dbReference type="SUPFAM" id="SSF56176">
    <property type="entry name" value="FAD-binding/transporter-associated domain-like"/>
    <property type="match status" value="1"/>
</dbReference>
<dbReference type="SUPFAM" id="SSF56194">
    <property type="entry name" value="Uridine diphospho-N-Acetylenolpyruvylglucosamine reductase, MurB, C-terminal domain"/>
    <property type="match status" value="1"/>
</dbReference>
<dbReference type="PROSITE" id="PS51387">
    <property type="entry name" value="FAD_PCMH"/>
    <property type="match status" value="1"/>
</dbReference>
<sequence length="336" mass="36068">MADFHEFYPLRRHNTFGFDVRARYASHIRSEADLLAALNDPRAVGLPLVVLGGGSNVVLTGDLDALVLLMEIPGFRVGTAPDAWLVTAGAGENWHGLVCRTIAEGLPGLENLALIPGTVGAAPIQNIGAYGVELRERFASVRALDRQTMRFVDLDLEQCAFSYRDSLFKQAGRDRYIITAVTLRLSRDWQPVLAYGELAREVEGNAAPDAAAIRDAVIAIRSRKLPDPAQIGNAGSFFKNPLVSAEQRDVLLASHPDLVSYAQPDGSFKLAAGWLIDRCGFKGLNDGPVGVYGKQALVLVHHGGGTGAALLALAGRIADTVQARFGVRIEPEPVVL</sequence>
<organism>
    <name type="scientific">Cupriavidus pinatubonensis (strain JMP 134 / LMG 1197)</name>
    <name type="common">Cupriavidus necator (strain JMP 134)</name>
    <dbReference type="NCBI Taxonomy" id="264198"/>
    <lineage>
        <taxon>Bacteria</taxon>
        <taxon>Pseudomonadati</taxon>
        <taxon>Pseudomonadota</taxon>
        <taxon>Betaproteobacteria</taxon>
        <taxon>Burkholderiales</taxon>
        <taxon>Burkholderiaceae</taxon>
        <taxon>Cupriavidus</taxon>
    </lineage>
</organism>
<proteinExistence type="inferred from homology"/>
<name>MURB_CUPPJ</name>
<evidence type="ECO:0000255" key="1">
    <source>
        <dbReference type="HAMAP-Rule" id="MF_00037"/>
    </source>
</evidence>